<reference key="1">
    <citation type="journal article" date="2007" name="PLoS Genet.">
        <title>Genome analysis of Minibacterium massiliensis highlights the convergent evolution of water-living bacteria.</title>
        <authorList>
            <person name="Audic S."/>
            <person name="Robert C."/>
            <person name="Campagna B."/>
            <person name="Parinello H."/>
            <person name="Claverie J.-M."/>
            <person name="Raoult D."/>
            <person name="Drancourt M."/>
        </authorList>
    </citation>
    <scope>NUCLEOTIDE SEQUENCE [LARGE SCALE GENOMIC DNA]</scope>
    <source>
        <strain>Marseille</strain>
    </source>
</reference>
<feature type="chain" id="PRO_1000022226" description="Potassium-transporting ATPase potassium-binding subunit">
    <location>
        <begin position="1"/>
        <end position="600"/>
    </location>
</feature>
<feature type="transmembrane region" description="Helical" evidence="1">
    <location>
        <begin position="6"/>
        <end position="26"/>
    </location>
</feature>
<feature type="transmembrane region" description="Helical" evidence="1">
    <location>
        <begin position="65"/>
        <end position="85"/>
    </location>
</feature>
<feature type="transmembrane region" description="Helical" evidence="1">
    <location>
        <begin position="136"/>
        <end position="156"/>
    </location>
</feature>
<feature type="transmembrane region" description="Helical" evidence="1">
    <location>
        <begin position="179"/>
        <end position="199"/>
    </location>
</feature>
<feature type="transmembrane region" description="Helical" evidence="1">
    <location>
        <begin position="283"/>
        <end position="303"/>
    </location>
</feature>
<feature type="transmembrane region" description="Helical" evidence="1">
    <location>
        <begin position="314"/>
        <end position="334"/>
    </location>
</feature>
<feature type="transmembrane region" description="Helical" evidence="1">
    <location>
        <begin position="367"/>
        <end position="387"/>
    </location>
</feature>
<feature type="transmembrane region" description="Helical" evidence="1">
    <location>
        <begin position="419"/>
        <end position="439"/>
    </location>
</feature>
<feature type="transmembrane region" description="Helical" evidence="1">
    <location>
        <begin position="458"/>
        <end position="478"/>
    </location>
</feature>
<feature type="transmembrane region" description="Helical" evidence="1">
    <location>
        <begin position="523"/>
        <end position="543"/>
    </location>
</feature>
<feature type="transmembrane region" description="Helical" evidence="1">
    <location>
        <begin position="566"/>
        <end position="586"/>
    </location>
</feature>
<accession>A6SZ16</accession>
<dbReference type="EMBL" id="CP000269">
    <property type="protein sequence ID" value="ABR89630.1"/>
    <property type="molecule type" value="Genomic_DNA"/>
</dbReference>
<dbReference type="RefSeq" id="WP_012079676.1">
    <property type="nucleotide sequence ID" value="NC_009659.1"/>
</dbReference>
<dbReference type="SMR" id="A6SZ16"/>
<dbReference type="STRING" id="375286.mma_1823"/>
<dbReference type="KEGG" id="mms:mma_1823"/>
<dbReference type="eggNOG" id="COG2060">
    <property type="taxonomic scope" value="Bacteria"/>
</dbReference>
<dbReference type="HOGENOM" id="CLU_018614_3_0_4"/>
<dbReference type="OrthoDB" id="9763796at2"/>
<dbReference type="Proteomes" id="UP000006388">
    <property type="component" value="Chromosome"/>
</dbReference>
<dbReference type="GO" id="GO:0005886">
    <property type="term" value="C:plasma membrane"/>
    <property type="evidence" value="ECO:0007669"/>
    <property type="project" value="UniProtKB-SubCell"/>
</dbReference>
<dbReference type="GO" id="GO:0008556">
    <property type="term" value="F:P-type potassium transmembrane transporter activity"/>
    <property type="evidence" value="ECO:0007669"/>
    <property type="project" value="InterPro"/>
</dbReference>
<dbReference type="GO" id="GO:0030955">
    <property type="term" value="F:potassium ion binding"/>
    <property type="evidence" value="ECO:0007669"/>
    <property type="project" value="UniProtKB-UniRule"/>
</dbReference>
<dbReference type="HAMAP" id="MF_00275">
    <property type="entry name" value="KdpA"/>
    <property type="match status" value="1"/>
</dbReference>
<dbReference type="InterPro" id="IPR004623">
    <property type="entry name" value="KdpA"/>
</dbReference>
<dbReference type="NCBIfam" id="TIGR00680">
    <property type="entry name" value="kdpA"/>
    <property type="match status" value="1"/>
</dbReference>
<dbReference type="PANTHER" id="PTHR30607">
    <property type="entry name" value="POTASSIUM-TRANSPORTING ATPASE A CHAIN"/>
    <property type="match status" value="1"/>
</dbReference>
<dbReference type="PANTHER" id="PTHR30607:SF2">
    <property type="entry name" value="POTASSIUM-TRANSPORTING ATPASE POTASSIUM-BINDING SUBUNIT"/>
    <property type="match status" value="1"/>
</dbReference>
<dbReference type="Pfam" id="PF03814">
    <property type="entry name" value="KdpA"/>
    <property type="match status" value="1"/>
</dbReference>
<dbReference type="PIRSF" id="PIRSF001294">
    <property type="entry name" value="K_ATPaseA"/>
    <property type="match status" value="1"/>
</dbReference>
<sequence length="600" mass="63341">MTTQSIILLAVFLLVLLVLAYPLGTYLAKVGGTAPIRGLGWLARFEQFLYRMAGSNAQTEMSWKGYAIALLVFNVLGTFFVYAVQRMQAWLPLNPQAFGNVSPDSSFNTAVSFVANTNWQGYGGESTMSYLTQMLALSGQNFFSAATGIAVIYALIRGFSHRSVKSIGNFWVDLTRSTLYVLLPLSVIVAVVLMSQGVIQNFSSYKDVALIDPITYQQPKVGTDGQPVVDDKGAPVLETLTAKTQTIAMGPVASQEAIKMLGTNGGGFFNANSAHPYENPTAFSNLVEMLAIFLIPAALCFTFGRMVGDMRQGWAILGAMTLLFVVLTAVVMGAEQQAHPGLAALGVDQGASLMQAGGNMEGKETRFGISASTLFAAVTTAASCGAVNAMHDSFTPLGGMIPTVLMQLGEVVFGGVGTGLYGMLVFAILAVFIAGLMIGRTPEYLGKKIQAYEMKMASLVILVTPCLVLLGTAIAVVLDPGKAGILNPGAHGFSEVLYAFTSAANNNGSAFAGLSANTPFYNVMLAIAMWFGRFAVIVPVLAIAGSLAAKKRLEVNAGTMPTHGPLFIALLVGTVLLVGVLNYVPALALGPVVEHLQLFK</sequence>
<comment type="function">
    <text evidence="1">Part of the high-affinity ATP-driven potassium transport (or Kdp) system, which catalyzes the hydrolysis of ATP coupled with the electrogenic transport of potassium into the cytoplasm. This subunit binds the periplasmic potassium ions and delivers the ions to the membrane domain of KdpB through an intramembrane tunnel.</text>
</comment>
<comment type="subunit">
    <text evidence="1">The system is composed of three essential subunits: KdpA, KdpB and KdpC.</text>
</comment>
<comment type="subcellular location">
    <subcellularLocation>
        <location evidence="1">Cell inner membrane</location>
        <topology evidence="1">Multi-pass membrane protein</topology>
    </subcellularLocation>
</comment>
<comment type="similarity">
    <text evidence="1">Belongs to the KdpA family.</text>
</comment>
<gene>
    <name evidence="1" type="primary">kdpA</name>
    <name type="ordered locus">mma_1823</name>
</gene>
<proteinExistence type="inferred from homology"/>
<protein>
    <recommendedName>
        <fullName evidence="1">Potassium-transporting ATPase potassium-binding subunit</fullName>
    </recommendedName>
    <alternativeName>
        <fullName evidence="1">ATP phosphohydrolase [potassium-transporting] A chain</fullName>
    </alternativeName>
    <alternativeName>
        <fullName evidence="1">Potassium-binding and translocating subunit A</fullName>
    </alternativeName>
    <alternativeName>
        <fullName evidence="1">Potassium-translocating ATPase A chain</fullName>
    </alternativeName>
</protein>
<name>KDPA_JANMA</name>
<keyword id="KW-0997">Cell inner membrane</keyword>
<keyword id="KW-1003">Cell membrane</keyword>
<keyword id="KW-0406">Ion transport</keyword>
<keyword id="KW-0472">Membrane</keyword>
<keyword id="KW-0630">Potassium</keyword>
<keyword id="KW-0633">Potassium transport</keyword>
<keyword id="KW-0812">Transmembrane</keyword>
<keyword id="KW-1133">Transmembrane helix</keyword>
<keyword id="KW-0813">Transport</keyword>
<organism>
    <name type="scientific">Janthinobacterium sp. (strain Marseille)</name>
    <name type="common">Minibacterium massiliensis</name>
    <dbReference type="NCBI Taxonomy" id="375286"/>
    <lineage>
        <taxon>Bacteria</taxon>
        <taxon>Pseudomonadati</taxon>
        <taxon>Pseudomonadota</taxon>
        <taxon>Betaproteobacteria</taxon>
        <taxon>Burkholderiales</taxon>
        <taxon>Oxalobacteraceae</taxon>
        <taxon>Janthinobacterium</taxon>
    </lineage>
</organism>
<evidence type="ECO:0000255" key="1">
    <source>
        <dbReference type="HAMAP-Rule" id="MF_00275"/>
    </source>
</evidence>